<organism>
    <name type="scientific">Brucella anthropi (strain ATCC 49188 / DSM 6882 / CCUG 24695 / JCM 21032 / LMG 3331 / NBRC 15819 / NCTC 12168 / Alc 37)</name>
    <name type="common">Ochrobactrum anthropi</name>
    <dbReference type="NCBI Taxonomy" id="439375"/>
    <lineage>
        <taxon>Bacteria</taxon>
        <taxon>Pseudomonadati</taxon>
        <taxon>Pseudomonadota</taxon>
        <taxon>Alphaproteobacteria</taxon>
        <taxon>Hyphomicrobiales</taxon>
        <taxon>Brucellaceae</taxon>
        <taxon>Brucella/Ochrobactrum group</taxon>
        <taxon>Brucella</taxon>
    </lineage>
</organism>
<evidence type="ECO:0000255" key="1">
    <source>
        <dbReference type="HAMAP-Rule" id="MF_00281"/>
    </source>
</evidence>
<feature type="chain" id="PRO_1000006867" description="Phenylalanine--tRNA ligase alpha subunit">
    <location>
        <begin position="1"/>
        <end position="369"/>
    </location>
</feature>
<feature type="binding site" evidence="1">
    <location>
        <position position="269"/>
    </location>
    <ligand>
        <name>Mg(2+)</name>
        <dbReference type="ChEBI" id="CHEBI:18420"/>
        <note>shared with beta subunit</note>
    </ligand>
</feature>
<gene>
    <name evidence="1" type="primary">pheS</name>
    <name type="ordered locus">Oant_0798</name>
</gene>
<keyword id="KW-0030">Aminoacyl-tRNA synthetase</keyword>
<keyword id="KW-0067">ATP-binding</keyword>
<keyword id="KW-0963">Cytoplasm</keyword>
<keyword id="KW-0436">Ligase</keyword>
<keyword id="KW-0460">Magnesium</keyword>
<keyword id="KW-0479">Metal-binding</keyword>
<keyword id="KW-0547">Nucleotide-binding</keyword>
<keyword id="KW-0648">Protein biosynthesis</keyword>
<keyword id="KW-1185">Reference proteome</keyword>
<comment type="catalytic activity">
    <reaction evidence="1">
        <text>tRNA(Phe) + L-phenylalanine + ATP = L-phenylalanyl-tRNA(Phe) + AMP + diphosphate + H(+)</text>
        <dbReference type="Rhea" id="RHEA:19413"/>
        <dbReference type="Rhea" id="RHEA-COMP:9668"/>
        <dbReference type="Rhea" id="RHEA-COMP:9699"/>
        <dbReference type="ChEBI" id="CHEBI:15378"/>
        <dbReference type="ChEBI" id="CHEBI:30616"/>
        <dbReference type="ChEBI" id="CHEBI:33019"/>
        <dbReference type="ChEBI" id="CHEBI:58095"/>
        <dbReference type="ChEBI" id="CHEBI:78442"/>
        <dbReference type="ChEBI" id="CHEBI:78531"/>
        <dbReference type="ChEBI" id="CHEBI:456215"/>
        <dbReference type="EC" id="6.1.1.20"/>
    </reaction>
</comment>
<comment type="cofactor">
    <cofactor evidence="1">
        <name>Mg(2+)</name>
        <dbReference type="ChEBI" id="CHEBI:18420"/>
    </cofactor>
    <text evidence="1">Binds 2 magnesium ions per tetramer.</text>
</comment>
<comment type="subunit">
    <text evidence="1">Tetramer of two alpha and two beta subunits.</text>
</comment>
<comment type="subcellular location">
    <subcellularLocation>
        <location evidence="1">Cytoplasm</location>
    </subcellularLocation>
</comment>
<comment type="similarity">
    <text evidence="1">Belongs to the class-II aminoacyl-tRNA synthetase family. Phe-tRNA synthetase alpha subunit type 1 subfamily.</text>
</comment>
<dbReference type="EC" id="6.1.1.20" evidence="1"/>
<dbReference type="EMBL" id="CP000758">
    <property type="protein sequence ID" value="ABS13520.1"/>
    <property type="molecule type" value="Genomic_DNA"/>
</dbReference>
<dbReference type="RefSeq" id="WP_012091033.1">
    <property type="nucleotide sequence ID" value="NC_009667.1"/>
</dbReference>
<dbReference type="SMR" id="A6WX16"/>
<dbReference type="STRING" id="439375.Oant_0798"/>
<dbReference type="KEGG" id="oan:Oant_0798"/>
<dbReference type="PATRIC" id="fig|439375.7.peg.842"/>
<dbReference type="eggNOG" id="COG0016">
    <property type="taxonomic scope" value="Bacteria"/>
</dbReference>
<dbReference type="HOGENOM" id="CLU_025086_0_1_5"/>
<dbReference type="PhylomeDB" id="A6WX16"/>
<dbReference type="Proteomes" id="UP000002301">
    <property type="component" value="Chromosome 1"/>
</dbReference>
<dbReference type="GO" id="GO:0005737">
    <property type="term" value="C:cytoplasm"/>
    <property type="evidence" value="ECO:0007669"/>
    <property type="project" value="UniProtKB-SubCell"/>
</dbReference>
<dbReference type="GO" id="GO:0005524">
    <property type="term" value="F:ATP binding"/>
    <property type="evidence" value="ECO:0007669"/>
    <property type="project" value="UniProtKB-UniRule"/>
</dbReference>
<dbReference type="GO" id="GO:0000287">
    <property type="term" value="F:magnesium ion binding"/>
    <property type="evidence" value="ECO:0007669"/>
    <property type="project" value="UniProtKB-UniRule"/>
</dbReference>
<dbReference type="GO" id="GO:0004826">
    <property type="term" value="F:phenylalanine-tRNA ligase activity"/>
    <property type="evidence" value="ECO:0007669"/>
    <property type="project" value="UniProtKB-UniRule"/>
</dbReference>
<dbReference type="GO" id="GO:0000049">
    <property type="term" value="F:tRNA binding"/>
    <property type="evidence" value="ECO:0007669"/>
    <property type="project" value="InterPro"/>
</dbReference>
<dbReference type="GO" id="GO:0006432">
    <property type="term" value="P:phenylalanyl-tRNA aminoacylation"/>
    <property type="evidence" value="ECO:0007669"/>
    <property type="project" value="UniProtKB-UniRule"/>
</dbReference>
<dbReference type="CDD" id="cd00496">
    <property type="entry name" value="PheRS_alpha_core"/>
    <property type="match status" value="1"/>
</dbReference>
<dbReference type="FunFam" id="3.30.930.10:FF:000003">
    <property type="entry name" value="Phenylalanine--tRNA ligase alpha subunit"/>
    <property type="match status" value="1"/>
</dbReference>
<dbReference type="Gene3D" id="3.30.930.10">
    <property type="entry name" value="Bira Bifunctional Protein, Domain 2"/>
    <property type="match status" value="1"/>
</dbReference>
<dbReference type="HAMAP" id="MF_00281">
    <property type="entry name" value="Phe_tRNA_synth_alpha1"/>
    <property type="match status" value="1"/>
</dbReference>
<dbReference type="InterPro" id="IPR006195">
    <property type="entry name" value="aa-tRNA-synth_II"/>
</dbReference>
<dbReference type="InterPro" id="IPR045864">
    <property type="entry name" value="aa-tRNA-synth_II/BPL/LPL"/>
</dbReference>
<dbReference type="InterPro" id="IPR004529">
    <property type="entry name" value="Phe-tRNA-synth_IIc_asu"/>
</dbReference>
<dbReference type="InterPro" id="IPR004188">
    <property type="entry name" value="Phe-tRNA_ligase_II_N"/>
</dbReference>
<dbReference type="InterPro" id="IPR022911">
    <property type="entry name" value="Phe_tRNA_ligase_alpha1_bac"/>
</dbReference>
<dbReference type="InterPro" id="IPR002319">
    <property type="entry name" value="Phenylalanyl-tRNA_Synthase"/>
</dbReference>
<dbReference type="InterPro" id="IPR010978">
    <property type="entry name" value="tRNA-bd_arm"/>
</dbReference>
<dbReference type="NCBIfam" id="TIGR00468">
    <property type="entry name" value="pheS"/>
    <property type="match status" value="1"/>
</dbReference>
<dbReference type="PANTHER" id="PTHR11538:SF41">
    <property type="entry name" value="PHENYLALANINE--TRNA LIGASE, MITOCHONDRIAL"/>
    <property type="match status" value="1"/>
</dbReference>
<dbReference type="PANTHER" id="PTHR11538">
    <property type="entry name" value="PHENYLALANYL-TRNA SYNTHETASE"/>
    <property type="match status" value="1"/>
</dbReference>
<dbReference type="Pfam" id="PF02912">
    <property type="entry name" value="Phe_tRNA-synt_N"/>
    <property type="match status" value="1"/>
</dbReference>
<dbReference type="Pfam" id="PF01409">
    <property type="entry name" value="tRNA-synt_2d"/>
    <property type="match status" value="1"/>
</dbReference>
<dbReference type="SUPFAM" id="SSF55681">
    <property type="entry name" value="Class II aaRS and biotin synthetases"/>
    <property type="match status" value="1"/>
</dbReference>
<dbReference type="SUPFAM" id="SSF46589">
    <property type="entry name" value="tRNA-binding arm"/>
    <property type="match status" value="1"/>
</dbReference>
<dbReference type="PROSITE" id="PS50862">
    <property type="entry name" value="AA_TRNA_LIGASE_II"/>
    <property type="match status" value="1"/>
</dbReference>
<proteinExistence type="inferred from homology"/>
<sequence length="369" mass="41536">MSDLEQLERQILEDIAAAADEPAIEAVRVAALGKKGSVSEKLKTLGSMTPEERQAQGPAINGLKNRVTEALTERKTELRKQAIAARLEREKVDVTLPVRESAASRGRIHPISQVIDEITAIFADMGFSIAEGPDIETDYYNFTALNFPEGHPAREMHDTFFFNADEKGERKLLRTHTSPVQVHTMEKFAAIRDKEDRDEPIRIVIPGKTYRMDSDATHSPMFHQVEGLVVDKSANVANMKWVLEEFCKSFFEVPSVKMRMRPSFFPFTEPSVEVDIQCDRSGPHVKFGEGNDWLEILGCGMVHPNVLRASGYDPDVYQGFAWGMGIDRIAMLKYGMPDLRAFFDADVRWIEHYGFRPLDIPTLFGGLSA</sequence>
<accession>A6WX16</accession>
<protein>
    <recommendedName>
        <fullName evidence="1">Phenylalanine--tRNA ligase alpha subunit</fullName>
        <ecNumber evidence="1">6.1.1.20</ecNumber>
    </recommendedName>
    <alternativeName>
        <fullName evidence="1">Phenylalanyl-tRNA synthetase alpha subunit</fullName>
        <shortName evidence="1">PheRS</shortName>
    </alternativeName>
</protein>
<reference key="1">
    <citation type="journal article" date="2011" name="J. Bacteriol.">
        <title>Genome of Ochrobactrum anthropi ATCC 49188 T, a versatile opportunistic pathogen and symbiont of several eukaryotic hosts.</title>
        <authorList>
            <person name="Chain P.S."/>
            <person name="Lang D.M."/>
            <person name="Comerci D.J."/>
            <person name="Malfatti S.A."/>
            <person name="Vergez L.M."/>
            <person name="Shin M."/>
            <person name="Ugalde R.A."/>
            <person name="Garcia E."/>
            <person name="Tolmasky M.E."/>
        </authorList>
    </citation>
    <scope>NUCLEOTIDE SEQUENCE [LARGE SCALE GENOMIC DNA]</scope>
    <source>
        <strain>ATCC 49188 / DSM 6882 / CCUG 24695 / JCM 21032 / LMG 3331 / NBRC 15819 / NCTC 12168 / Alc 37</strain>
    </source>
</reference>
<name>SYFA_BRUA4</name>